<sequence length="271" mass="28904">MKAASREALATVESKLDEFLSGDRSVATATQAGQDLFEVVRVLDGDRELRVALTDDASTSEERKSLVQTLFGGKVSPVALQVLQEAAAAQWSTPRDIARGLIILGRRALLRGAEFEGKLGQVEDELFSLSRVLDREGELTQLLSDRTATSDRKVGLLASVLYGKVTMVTEALALQAIGRPEQNPIDDLAGLADTAAKLQGRTIARVTSAGELNDSQRAALAEKLGKIYGRAMSIHSEVDTSLLGGMTIRVGDEVIDGSTAGKIARLRAQMA</sequence>
<keyword id="KW-0066">ATP synthesis</keyword>
<keyword id="KW-1003">Cell membrane</keyword>
<keyword id="KW-0139">CF(1)</keyword>
<keyword id="KW-0375">Hydrogen ion transport</keyword>
<keyword id="KW-0406">Ion transport</keyword>
<keyword id="KW-0472">Membrane</keyword>
<keyword id="KW-1185">Reference proteome</keyword>
<keyword id="KW-0813">Transport</keyword>
<accession>C3PFR2</accession>
<evidence type="ECO:0000255" key="1">
    <source>
        <dbReference type="HAMAP-Rule" id="MF_01416"/>
    </source>
</evidence>
<feature type="chain" id="PRO_0000382087" description="ATP synthase subunit delta">
    <location>
        <begin position="1"/>
        <end position="271"/>
    </location>
</feature>
<dbReference type="EMBL" id="CP001601">
    <property type="protein sequence ID" value="ACP32666.1"/>
    <property type="molecule type" value="Genomic_DNA"/>
</dbReference>
<dbReference type="RefSeq" id="WP_010187070.1">
    <property type="nucleotide sequence ID" value="NZ_ACLH01000006.1"/>
</dbReference>
<dbReference type="SMR" id="C3PFR2"/>
<dbReference type="STRING" id="548476.cauri_1071"/>
<dbReference type="GeneID" id="31923693"/>
<dbReference type="KEGG" id="car:cauri_1071"/>
<dbReference type="eggNOG" id="COG0712">
    <property type="taxonomic scope" value="Bacteria"/>
</dbReference>
<dbReference type="HOGENOM" id="CLU_088880_0_0_11"/>
<dbReference type="OrthoDB" id="5242917at2"/>
<dbReference type="Proteomes" id="UP000002077">
    <property type="component" value="Chromosome"/>
</dbReference>
<dbReference type="GO" id="GO:0005886">
    <property type="term" value="C:plasma membrane"/>
    <property type="evidence" value="ECO:0007669"/>
    <property type="project" value="UniProtKB-SubCell"/>
</dbReference>
<dbReference type="GO" id="GO:0045259">
    <property type="term" value="C:proton-transporting ATP synthase complex"/>
    <property type="evidence" value="ECO:0007669"/>
    <property type="project" value="UniProtKB-KW"/>
</dbReference>
<dbReference type="GO" id="GO:0046933">
    <property type="term" value="F:proton-transporting ATP synthase activity, rotational mechanism"/>
    <property type="evidence" value="ECO:0007669"/>
    <property type="project" value="UniProtKB-UniRule"/>
</dbReference>
<dbReference type="HAMAP" id="MF_01416">
    <property type="entry name" value="ATP_synth_delta_bact"/>
    <property type="match status" value="1"/>
</dbReference>
<dbReference type="InterPro" id="IPR020781">
    <property type="entry name" value="ATPase_OSCP/d_CS"/>
</dbReference>
<dbReference type="InterPro" id="IPR000711">
    <property type="entry name" value="ATPase_OSCP/dsu"/>
</dbReference>
<dbReference type="NCBIfam" id="TIGR01145">
    <property type="entry name" value="ATP_synt_delta"/>
    <property type="match status" value="1"/>
</dbReference>
<dbReference type="NCBIfam" id="NF009967">
    <property type="entry name" value="PRK13430.1"/>
    <property type="match status" value="1"/>
</dbReference>
<dbReference type="PANTHER" id="PTHR11910">
    <property type="entry name" value="ATP SYNTHASE DELTA CHAIN"/>
    <property type="match status" value="1"/>
</dbReference>
<dbReference type="Pfam" id="PF00213">
    <property type="entry name" value="OSCP"/>
    <property type="match status" value="1"/>
</dbReference>
<dbReference type="PRINTS" id="PR00125">
    <property type="entry name" value="ATPASEDELTA"/>
</dbReference>
<dbReference type="PROSITE" id="PS00389">
    <property type="entry name" value="ATPASE_DELTA"/>
    <property type="match status" value="1"/>
</dbReference>
<comment type="function">
    <text evidence="1">F(1)F(0) ATP synthase produces ATP from ADP in the presence of a proton or sodium gradient. F-type ATPases consist of two structural domains, F(1) containing the extramembraneous catalytic core and F(0) containing the membrane proton channel, linked together by a central stalk and a peripheral stalk. During catalysis, ATP synthesis in the catalytic domain of F(1) is coupled via a rotary mechanism of the central stalk subunits to proton translocation.</text>
</comment>
<comment type="function">
    <text evidence="1">This protein is part of the stalk that links CF(0) to CF(1). It either transmits conformational changes from CF(0) to CF(1) or is implicated in proton conduction.</text>
</comment>
<comment type="subunit">
    <text evidence="1">F-type ATPases have 2 components, F(1) - the catalytic core - and F(0) - the membrane proton channel. F(1) has five subunits: alpha(3), beta(3), gamma(1), delta(1), epsilon(1). F(0) has three main subunits: a(1), b(2) and c(10-14). The alpha and beta chains form an alternating ring which encloses part of the gamma chain. F(1) is attached to F(0) by a central stalk formed by the gamma and epsilon chains, while a peripheral stalk is formed by the delta and b chains.</text>
</comment>
<comment type="subcellular location">
    <subcellularLocation>
        <location evidence="1">Cell membrane</location>
        <topology evidence="1">Peripheral membrane protein</topology>
    </subcellularLocation>
</comment>
<comment type="similarity">
    <text evidence="1">Belongs to the ATPase delta chain family.</text>
</comment>
<gene>
    <name evidence="1" type="primary">atpH</name>
    <name type="ordered locus">cauri_1071</name>
</gene>
<reference key="1">
    <citation type="journal article" date="2010" name="BMC Genomics">
        <title>Complete genome sequence and lifestyle of black-pigmented Corynebacterium aurimucosum ATCC 700975 (formerly C. nigricans CN-1) isolated from a vaginal swab of a woman with spontaneous abortion.</title>
        <authorList>
            <person name="Trost E."/>
            <person name="Gotker S."/>
            <person name="Schneider J."/>
            <person name="Schneiker-Bekel S."/>
            <person name="Szczepanowski R."/>
            <person name="Tilker A."/>
            <person name="Viehoever P."/>
            <person name="Arnold W."/>
            <person name="Bekel T."/>
            <person name="Blom J."/>
            <person name="Gartemann K.H."/>
            <person name="Linke B."/>
            <person name="Goesmann A."/>
            <person name="Puhler A."/>
            <person name="Shukla S.K."/>
            <person name="Tauch A."/>
        </authorList>
    </citation>
    <scope>NUCLEOTIDE SEQUENCE [LARGE SCALE GENOMIC DNA]</scope>
    <source>
        <strain>ATCC 700975 / DSM 44827 / CIP 107346 / CN-1</strain>
    </source>
</reference>
<proteinExistence type="inferred from homology"/>
<organism>
    <name type="scientific">Corynebacterium aurimucosum (strain ATCC 700975 / DSM 44827 / CIP 107346 / CN-1)</name>
    <name type="common">Corynebacterium nigricans</name>
    <dbReference type="NCBI Taxonomy" id="548476"/>
    <lineage>
        <taxon>Bacteria</taxon>
        <taxon>Bacillati</taxon>
        <taxon>Actinomycetota</taxon>
        <taxon>Actinomycetes</taxon>
        <taxon>Mycobacteriales</taxon>
        <taxon>Corynebacteriaceae</taxon>
        <taxon>Corynebacterium</taxon>
    </lineage>
</organism>
<protein>
    <recommendedName>
        <fullName evidence="1">ATP synthase subunit delta</fullName>
    </recommendedName>
    <alternativeName>
        <fullName evidence="1">ATP synthase F(1) sector subunit delta</fullName>
    </alternativeName>
    <alternativeName>
        <fullName evidence="1">F-type ATPase subunit delta</fullName>
        <shortName evidence="1">F-ATPase subunit delta</shortName>
    </alternativeName>
</protein>
<name>ATPD_CORA7</name>